<keyword id="KW-0963">Cytoplasm</keyword>
<keyword id="KW-0238">DNA-binding</keyword>
<keyword id="KW-0255">Endonuclease</keyword>
<keyword id="KW-0378">Hydrolase</keyword>
<keyword id="KW-0540">Nuclease</keyword>
<organism>
    <name type="scientific">Rhodococcus erythropolis (strain PR4 / NBRC 100887)</name>
    <dbReference type="NCBI Taxonomy" id="234621"/>
    <lineage>
        <taxon>Bacteria</taxon>
        <taxon>Bacillati</taxon>
        <taxon>Actinomycetota</taxon>
        <taxon>Actinomycetes</taxon>
        <taxon>Mycobacteriales</taxon>
        <taxon>Nocardiaceae</taxon>
        <taxon>Rhodococcus</taxon>
        <taxon>Rhodococcus erythropolis group</taxon>
    </lineage>
</organism>
<dbReference type="EC" id="3.1.-.-" evidence="1"/>
<dbReference type="EMBL" id="AP008957">
    <property type="protein sequence ID" value="BAH34606.1"/>
    <property type="molecule type" value="Genomic_DNA"/>
</dbReference>
<dbReference type="RefSeq" id="WP_003945160.1">
    <property type="nucleotide sequence ID" value="NC_012490.1"/>
</dbReference>
<dbReference type="SMR" id="C1A1X1"/>
<dbReference type="GeneID" id="93807008"/>
<dbReference type="KEGG" id="rer:RER_38980"/>
<dbReference type="eggNOG" id="COG1637">
    <property type="taxonomic scope" value="Bacteria"/>
</dbReference>
<dbReference type="HOGENOM" id="CLU_069350_0_0_11"/>
<dbReference type="Proteomes" id="UP000002204">
    <property type="component" value="Chromosome"/>
</dbReference>
<dbReference type="GO" id="GO:0005737">
    <property type="term" value="C:cytoplasm"/>
    <property type="evidence" value="ECO:0007669"/>
    <property type="project" value="UniProtKB-SubCell"/>
</dbReference>
<dbReference type="GO" id="GO:0003677">
    <property type="term" value="F:DNA binding"/>
    <property type="evidence" value="ECO:0007669"/>
    <property type="project" value="UniProtKB-KW"/>
</dbReference>
<dbReference type="GO" id="GO:0000014">
    <property type="term" value="F:single-stranded DNA endodeoxyribonuclease activity"/>
    <property type="evidence" value="ECO:0007669"/>
    <property type="project" value="UniProtKB-UniRule"/>
</dbReference>
<dbReference type="CDD" id="cd22341">
    <property type="entry name" value="NucS-like"/>
    <property type="match status" value="1"/>
</dbReference>
<dbReference type="Gene3D" id="2.70.180.20">
    <property type="match status" value="1"/>
</dbReference>
<dbReference type="Gene3D" id="3.40.1350.10">
    <property type="match status" value="1"/>
</dbReference>
<dbReference type="HAMAP" id="MF_00722">
    <property type="entry name" value="NucS"/>
    <property type="match status" value="1"/>
</dbReference>
<dbReference type="InterPro" id="IPR002793">
    <property type="entry name" value="Endonuclease_NucS"/>
</dbReference>
<dbReference type="InterPro" id="IPR048301">
    <property type="entry name" value="NucS_C"/>
</dbReference>
<dbReference type="InterPro" id="IPR048302">
    <property type="entry name" value="NucS_N"/>
</dbReference>
<dbReference type="InterPro" id="IPR049173">
    <property type="entry name" value="NucS_N_sf"/>
</dbReference>
<dbReference type="InterPro" id="IPR011856">
    <property type="entry name" value="tRNA_endonuc-like_dom_sf"/>
</dbReference>
<dbReference type="NCBIfam" id="NF002876">
    <property type="entry name" value="PRK03298.1"/>
    <property type="match status" value="1"/>
</dbReference>
<dbReference type="PANTHER" id="PTHR38814">
    <property type="entry name" value="ENDONUCLEASE NUCS"/>
    <property type="match status" value="1"/>
</dbReference>
<dbReference type="PANTHER" id="PTHR38814:SF1">
    <property type="entry name" value="ENDONUCLEASE NUCS"/>
    <property type="match status" value="1"/>
</dbReference>
<dbReference type="Pfam" id="PF01939">
    <property type="entry name" value="NucS_C"/>
    <property type="match status" value="1"/>
</dbReference>
<dbReference type="Pfam" id="PF21003">
    <property type="entry name" value="NucS_N"/>
    <property type="match status" value="1"/>
</dbReference>
<proteinExistence type="inferred from homology"/>
<protein>
    <recommendedName>
        <fullName evidence="1">Endonuclease NucS</fullName>
        <ecNumber evidence="1">3.1.-.-</ecNumber>
    </recommendedName>
</protein>
<name>NUCS_RHOE4</name>
<feature type="chain" id="PRO_1000212716" description="Endonuclease NucS">
    <location>
        <begin position="1"/>
        <end position="224"/>
    </location>
</feature>
<accession>C1A1X1</accession>
<reference key="1">
    <citation type="submission" date="2005-03" db="EMBL/GenBank/DDBJ databases">
        <title>Comparison of the complete genome sequences of Rhodococcus erythropolis PR4 and Rhodococcus opacus B4.</title>
        <authorList>
            <person name="Takarada H."/>
            <person name="Sekine M."/>
            <person name="Hosoyama A."/>
            <person name="Yamada R."/>
            <person name="Fujisawa T."/>
            <person name="Omata S."/>
            <person name="Shimizu A."/>
            <person name="Tsukatani N."/>
            <person name="Tanikawa S."/>
            <person name="Fujita N."/>
            <person name="Harayama S."/>
        </authorList>
    </citation>
    <scope>NUCLEOTIDE SEQUENCE [LARGE SCALE GENOMIC DNA]</scope>
    <source>
        <strain>PR4 / NBRC 100887</strain>
    </source>
</reference>
<comment type="function">
    <text evidence="1">Cleaves both 3' and 5' ssDNA extremities of branched DNA structures.</text>
</comment>
<comment type="subcellular location">
    <subcellularLocation>
        <location evidence="1">Cytoplasm</location>
    </subcellularLocation>
</comment>
<comment type="similarity">
    <text evidence="1">Belongs to the NucS endonuclease family.</text>
</comment>
<evidence type="ECO:0000255" key="1">
    <source>
        <dbReference type="HAMAP-Rule" id="MF_00722"/>
    </source>
</evidence>
<sequence>MRLVIARCRVDYVGRLTSHLPTARRLLLVKADGSVSIHADDRAYKPLNWMSPPCWLVETTGDSDDILWVVTNKAGEELRITLEEVEHDSSYELGLDPGLIKDGVEAHLQELLAEHVETLGPGYTLVRREYMTAIGPVDLLVRDADGASVAVEIKRRGEIDGVEQLTRYLELLNRDPLLAPVTGVFAAQQIKPQAKTLANDRGIRCLVLDYEALRGTESTEFRLF</sequence>
<gene>
    <name evidence="1" type="primary">nucS</name>
    <name type="ordered locus">RER_38980</name>
</gene>